<dbReference type="EC" id="2.8.1.13" evidence="1"/>
<dbReference type="EMBL" id="BX571868">
    <property type="protein sequence ID" value="CAE15178.1"/>
    <property type="molecule type" value="Genomic_DNA"/>
</dbReference>
<dbReference type="RefSeq" id="WP_011147024.1">
    <property type="nucleotide sequence ID" value="NC_005126.1"/>
</dbReference>
<dbReference type="SMR" id="Q7MB22"/>
<dbReference type="STRING" id="243265.plu2804"/>
<dbReference type="GeneID" id="48849067"/>
<dbReference type="KEGG" id="plu:plu2804"/>
<dbReference type="eggNOG" id="COG0482">
    <property type="taxonomic scope" value="Bacteria"/>
</dbReference>
<dbReference type="HOGENOM" id="CLU_035188_1_0_6"/>
<dbReference type="OrthoDB" id="9800696at2"/>
<dbReference type="Proteomes" id="UP000002514">
    <property type="component" value="Chromosome"/>
</dbReference>
<dbReference type="GO" id="GO:0005737">
    <property type="term" value="C:cytoplasm"/>
    <property type="evidence" value="ECO:0007669"/>
    <property type="project" value="UniProtKB-SubCell"/>
</dbReference>
<dbReference type="GO" id="GO:0005524">
    <property type="term" value="F:ATP binding"/>
    <property type="evidence" value="ECO:0007669"/>
    <property type="project" value="UniProtKB-KW"/>
</dbReference>
<dbReference type="GO" id="GO:0000049">
    <property type="term" value="F:tRNA binding"/>
    <property type="evidence" value="ECO:0007669"/>
    <property type="project" value="UniProtKB-KW"/>
</dbReference>
<dbReference type="GO" id="GO:0103016">
    <property type="term" value="F:tRNA-uridine 2-sulfurtransferase activity"/>
    <property type="evidence" value="ECO:0007669"/>
    <property type="project" value="UniProtKB-EC"/>
</dbReference>
<dbReference type="GO" id="GO:0002143">
    <property type="term" value="P:tRNA wobble position uridine thiolation"/>
    <property type="evidence" value="ECO:0007669"/>
    <property type="project" value="TreeGrafter"/>
</dbReference>
<dbReference type="CDD" id="cd01998">
    <property type="entry name" value="MnmA_TRMU-like"/>
    <property type="match status" value="1"/>
</dbReference>
<dbReference type="FunFam" id="2.30.30.280:FF:000001">
    <property type="entry name" value="tRNA-specific 2-thiouridylase MnmA"/>
    <property type="match status" value="1"/>
</dbReference>
<dbReference type="FunFam" id="2.40.30.10:FF:000023">
    <property type="entry name" value="tRNA-specific 2-thiouridylase MnmA"/>
    <property type="match status" value="1"/>
</dbReference>
<dbReference type="FunFam" id="3.40.50.620:FF:000004">
    <property type="entry name" value="tRNA-specific 2-thiouridylase MnmA"/>
    <property type="match status" value="1"/>
</dbReference>
<dbReference type="Gene3D" id="2.30.30.280">
    <property type="entry name" value="Adenine nucleotide alpha hydrolases-like domains"/>
    <property type="match status" value="1"/>
</dbReference>
<dbReference type="Gene3D" id="3.40.50.620">
    <property type="entry name" value="HUPs"/>
    <property type="match status" value="1"/>
</dbReference>
<dbReference type="Gene3D" id="2.40.30.10">
    <property type="entry name" value="Translation factors"/>
    <property type="match status" value="1"/>
</dbReference>
<dbReference type="HAMAP" id="MF_00144">
    <property type="entry name" value="tRNA_thiouridyl_MnmA"/>
    <property type="match status" value="1"/>
</dbReference>
<dbReference type="InterPro" id="IPR004506">
    <property type="entry name" value="MnmA-like"/>
</dbReference>
<dbReference type="InterPro" id="IPR046885">
    <property type="entry name" value="MnmA-like_C"/>
</dbReference>
<dbReference type="InterPro" id="IPR046884">
    <property type="entry name" value="MnmA-like_central"/>
</dbReference>
<dbReference type="InterPro" id="IPR023382">
    <property type="entry name" value="MnmA-like_central_sf"/>
</dbReference>
<dbReference type="InterPro" id="IPR014729">
    <property type="entry name" value="Rossmann-like_a/b/a_fold"/>
</dbReference>
<dbReference type="NCBIfam" id="NF001138">
    <property type="entry name" value="PRK00143.1"/>
    <property type="match status" value="1"/>
</dbReference>
<dbReference type="NCBIfam" id="TIGR00420">
    <property type="entry name" value="trmU"/>
    <property type="match status" value="1"/>
</dbReference>
<dbReference type="PANTHER" id="PTHR11933:SF5">
    <property type="entry name" value="MITOCHONDRIAL TRNA-SPECIFIC 2-THIOURIDYLASE 1"/>
    <property type="match status" value="1"/>
</dbReference>
<dbReference type="PANTHER" id="PTHR11933">
    <property type="entry name" value="TRNA 5-METHYLAMINOMETHYL-2-THIOURIDYLATE -METHYLTRANSFERASE"/>
    <property type="match status" value="1"/>
</dbReference>
<dbReference type="Pfam" id="PF03054">
    <property type="entry name" value="tRNA_Me_trans"/>
    <property type="match status" value="1"/>
</dbReference>
<dbReference type="Pfam" id="PF20258">
    <property type="entry name" value="tRNA_Me_trans_C"/>
    <property type="match status" value="1"/>
</dbReference>
<dbReference type="Pfam" id="PF20259">
    <property type="entry name" value="tRNA_Me_trans_M"/>
    <property type="match status" value="1"/>
</dbReference>
<dbReference type="SUPFAM" id="SSF52402">
    <property type="entry name" value="Adenine nucleotide alpha hydrolases-like"/>
    <property type="match status" value="1"/>
</dbReference>
<comment type="function">
    <text evidence="1">Catalyzes the 2-thiolation of uridine at the wobble position (U34) of tRNA(Lys), tRNA(Glu) and tRNA(Gln), leading to the formation of s(2)U34, the first step of tRNA-mnm(5)s(2)U34 synthesis. Sulfur is provided by IscS, via a sulfur-relay system. Binds ATP and its substrate tRNAs.</text>
</comment>
<comment type="catalytic activity">
    <reaction evidence="1">
        <text>S-sulfanyl-L-cysteinyl-[protein] + uridine(34) in tRNA + AH2 + ATP = 2-thiouridine(34) in tRNA + L-cysteinyl-[protein] + A + AMP + diphosphate + H(+)</text>
        <dbReference type="Rhea" id="RHEA:47032"/>
        <dbReference type="Rhea" id="RHEA-COMP:10131"/>
        <dbReference type="Rhea" id="RHEA-COMP:11726"/>
        <dbReference type="Rhea" id="RHEA-COMP:11727"/>
        <dbReference type="Rhea" id="RHEA-COMP:11728"/>
        <dbReference type="ChEBI" id="CHEBI:13193"/>
        <dbReference type="ChEBI" id="CHEBI:15378"/>
        <dbReference type="ChEBI" id="CHEBI:17499"/>
        <dbReference type="ChEBI" id="CHEBI:29950"/>
        <dbReference type="ChEBI" id="CHEBI:30616"/>
        <dbReference type="ChEBI" id="CHEBI:33019"/>
        <dbReference type="ChEBI" id="CHEBI:61963"/>
        <dbReference type="ChEBI" id="CHEBI:65315"/>
        <dbReference type="ChEBI" id="CHEBI:87170"/>
        <dbReference type="ChEBI" id="CHEBI:456215"/>
        <dbReference type="EC" id="2.8.1.13"/>
    </reaction>
</comment>
<comment type="subunit">
    <text evidence="1">Interacts with TusE.</text>
</comment>
<comment type="subcellular location">
    <subcellularLocation>
        <location evidence="1">Cytoplasm</location>
    </subcellularLocation>
</comment>
<comment type="similarity">
    <text evidence="1">Belongs to the MnmA/TRMU family.</text>
</comment>
<keyword id="KW-0067">ATP-binding</keyword>
<keyword id="KW-0963">Cytoplasm</keyword>
<keyword id="KW-1015">Disulfide bond</keyword>
<keyword id="KW-0547">Nucleotide-binding</keyword>
<keyword id="KW-1185">Reference proteome</keyword>
<keyword id="KW-0694">RNA-binding</keyword>
<keyword id="KW-0808">Transferase</keyword>
<keyword id="KW-0819">tRNA processing</keyword>
<keyword id="KW-0820">tRNA-binding</keyword>
<feature type="chain" id="PRO_0000349737" description="tRNA-specific 2-thiouridylase MnmA">
    <location>
        <begin position="1"/>
        <end position="367"/>
    </location>
</feature>
<feature type="region of interest" description="Interaction with target base in tRNA" evidence="1">
    <location>
        <begin position="98"/>
        <end position="100"/>
    </location>
</feature>
<feature type="region of interest" description="Interaction with tRNA" evidence="1">
    <location>
        <begin position="150"/>
        <end position="152"/>
    </location>
</feature>
<feature type="region of interest" description="Interaction with tRNA" evidence="1">
    <location>
        <begin position="312"/>
        <end position="313"/>
    </location>
</feature>
<feature type="active site" description="Nucleophile" evidence="1">
    <location>
        <position position="103"/>
    </location>
</feature>
<feature type="active site" description="Cysteine persulfide intermediate" evidence="1">
    <location>
        <position position="200"/>
    </location>
</feature>
<feature type="binding site" evidence="1">
    <location>
        <begin position="12"/>
        <end position="19"/>
    </location>
    <ligand>
        <name>ATP</name>
        <dbReference type="ChEBI" id="CHEBI:30616"/>
    </ligand>
</feature>
<feature type="binding site" evidence="1">
    <location>
        <position position="38"/>
    </location>
    <ligand>
        <name>ATP</name>
        <dbReference type="ChEBI" id="CHEBI:30616"/>
    </ligand>
</feature>
<feature type="binding site" evidence="1">
    <location>
        <position position="128"/>
    </location>
    <ligand>
        <name>ATP</name>
        <dbReference type="ChEBI" id="CHEBI:30616"/>
    </ligand>
</feature>
<feature type="site" description="Interaction with tRNA" evidence="1">
    <location>
        <position position="129"/>
    </location>
</feature>
<feature type="site" description="Interaction with tRNA" evidence="1">
    <location>
        <position position="345"/>
    </location>
</feature>
<feature type="disulfide bond" description="Alternate" evidence="1">
    <location>
        <begin position="103"/>
        <end position="200"/>
    </location>
</feature>
<organism>
    <name type="scientific">Photorhabdus laumondii subsp. laumondii (strain DSM 15139 / CIP 105565 / TT01)</name>
    <name type="common">Photorhabdus luminescens subsp. laumondii</name>
    <dbReference type="NCBI Taxonomy" id="243265"/>
    <lineage>
        <taxon>Bacteria</taxon>
        <taxon>Pseudomonadati</taxon>
        <taxon>Pseudomonadota</taxon>
        <taxon>Gammaproteobacteria</taxon>
        <taxon>Enterobacterales</taxon>
        <taxon>Morganellaceae</taxon>
        <taxon>Photorhabdus</taxon>
    </lineage>
</organism>
<accession>Q7MB22</accession>
<evidence type="ECO:0000255" key="1">
    <source>
        <dbReference type="HAMAP-Rule" id="MF_00144"/>
    </source>
</evidence>
<name>MNMA_PHOLL</name>
<reference key="1">
    <citation type="journal article" date="2003" name="Nat. Biotechnol.">
        <title>The genome sequence of the entomopathogenic bacterium Photorhabdus luminescens.</title>
        <authorList>
            <person name="Duchaud E."/>
            <person name="Rusniok C."/>
            <person name="Frangeul L."/>
            <person name="Buchrieser C."/>
            <person name="Givaudan A."/>
            <person name="Taourit S."/>
            <person name="Bocs S."/>
            <person name="Boursaux-Eude C."/>
            <person name="Chandler M."/>
            <person name="Charles J.-F."/>
            <person name="Dassa E."/>
            <person name="Derose R."/>
            <person name="Derzelle S."/>
            <person name="Freyssinet G."/>
            <person name="Gaudriault S."/>
            <person name="Medigue C."/>
            <person name="Lanois A."/>
            <person name="Powell K."/>
            <person name="Siguier P."/>
            <person name="Vincent R."/>
            <person name="Wingate V."/>
            <person name="Zouine M."/>
            <person name="Glaser P."/>
            <person name="Boemare N."/>
            <person name="Danchin A."/>
            <person name="Kunst F."/>
        </authorList>
    </citation>
    <scope>NUCLEOTIDE SEQUENCE [LARGE SCALE GENOMIC DNA]</scope>
    <source>
        <strain>DSM 15139 / CIP 105565 / TT01</strain>
    </source>
</reference>
<proteinExistence type="inferred from homology"/>
<protein>
    <recommendedName>
        <fullName evidence="1">tRNA-specific 2-thiouridylase MnmA</fullName>
        <ecNumber evidence="1">2.8.1.13</ecNumber>
    </recommendedName>
</protein>
<sequence>MSDNSQKKVIVGMSGGVDSSVSAYLLQQQGYQVAGLFMKNWEEDDDEEYCSAATDLADAQSVCDKLGIELHTVNFAAEYWDNVFEHFLAEYRAGRTPNPDILCNKEIKFKAFLEFAAEDLNADYIATGHYVRRRDINGKSQLLRGLDNNKDQSYFLYTLSHQQIAQSLFPVGELEKPEVRRIAEKIGLVTAKKKDSTGICFIGERKFRDFLGRYLPAKPGPIMTVDGESLGEHQGLMYHTLGQRKGLGIGGTKEGSEEPWYVIDKDVQNNILIVAQGHEHPRLMSTGLIAQQLYWVDRQTLTEKIHCVVKTRYRQQDIPCSVTPISEDKIEVHFANPVAAVTPGQSAVFYQGEVCLGGGVIEQRLQE</sequence>
<gene>
    <name evidence="1" type="primary">mnmA</name>
    <name type="ordered locus">plu2804</name>
</gene>